<reference key="1">
    <citation type="journal article" date="2006" name="Environ. Microbiol.">
        <title>Whole genome analysis of the marine Bacteroidetes'Gramella forsetii' reveals adaptations to degradation of polymeric organic matter.</title>
        <authorList>
            <person name="Bauer M."/>
            <person name="Kube M."/>
            <person name="Teeling H."/>
            <person name="Richter M."/>
            <person name="Lombardot T."/>
            <person name="Allers E."/>
            <person name="Wuerdemann C.A."/>
            <person name="Quast C."/>
            <person name="Kuhl H."/>
            <person name="Knaust F."/>
            <person name="Woebken D."/>
            <person name="Bischof K."/>
            <person name="Mussmann M."/>
            <person name="Choudhuri J.V."/>
            <person name="Meyer F."/>
            <person name="Reinhardt R."/>
            <person name="Amann R.I."/>
            <person name="Gloeckner F.O."/>
        </authorList>
    </citation>
    <scope>NUCLEOTIDE SEQUENCE [LARGE SCALE GENOMIC DNA]</scope>
    <source>
        <strain>DSM 17595 / CGMCC 1.15422 / KT0803</strain>
    </source>
</reference>
<sequence length="256" mass="28690">MNRINQKLQEDHKLLSIYFTAGYPDFEDTEKIIVDLEKSGVDFIEIGLPFSDPLADGPTIQKSSTKALKNGMTTSKLFEQLKGIRNKVEIPLIIMGYFNPILQYGVEDFCKKCQETGIDGLIIPDLPVDVYHEKYQELFEQYGLRNIFLITPQTSDERIHFIDSVSNGFIYMVSSASVTGSTSGFGEDTRAYFKRVNDLQLKNPQIVGFGIKDNETFNQATEYAKGAIIGSAFIKHINENGTSNVGSFVKKVKALT</sequence>
<feature type="chain" id="PRO_1000018210" description="Tryptophan synthase alpha chain">
    <location>
        <begin position="1"/>
        <end position="256"/>
    </location>
</feature>
<feature type="active site" description="Proton acceptor" evidence="1">
    <location>
        <position position="45"/>
    </location>
</feature>
<feature type="active site" description="Proton acceptor" evidence="1">
    <location>
        <position position="56"/>
    </location>
</feature>
<proteinExistence type="inferred from homology"/>
<accession>A0M4T5</accession>
<keyword id="KW-0028">Amino-acid biosynthesis</keyword>
<keyword id="KW-0057">Aromatic amino acid biosynthesis</keyword>
<keyword id="KW-0456">Lyase</keyword>
<keyword id="KW-0822">Tryptophan biosynthesis</keyword>
<name>TRPA_CHRFK</name>
<gene>
    <name evidence="1" type="primary">trpA</name>
    <name type="ordered locus">GFO_2674</name>
</gene>
<evidence type="ECO:0000255" key="1">
    <source>
        <dbReference type="HAMAP-Rule" id="MF_00131"/>
    </source>
</evidence>
<comment type="function">
    <text evidence="1">The alpha subunit is responsible for the aldol cleavage of indoleglycerol phosphate to indole and glyceraldehyde 3-phosphate.</text>
</comment>
<comment type="catalytic activity">
    <reaction evidence="1">
        <text>(1S,2R)-1-C-(indol-3-yl)glycerol 3-phosphate + L-serine = D-glyceraldehyde 3-phosphate + L-tryptophan + H2O</text>
        <dbReference type="Rhea" id="RHEA:10532"/>
        <dbReference type="ChEBI" id="CHEBI:15377"/>
        <dbReference type="ChEBI" id="CHEBI:33384"/>
        <dbReference type="ChEBI" id="CHEBI:57912"/>
        <dbReference type="ChEBI" id="CHEBI:58866"/>
        <dbReference type="ChEBI" id="CHEBI:59776"/>
        <dbReference type="EC" id="4.2.1.20"/>
    </reaction>
</comment>
<comment type="pathway">
    <text evidence="1">Amino-acid biosynthesis; L-tryptophan biosynthesis; L-tryptophan from chorismate: step 5/5.</text>
</comment>
<comment type="subunit">
    <text evidence="1">Tetramer of two alpha and two beta chains.</text>
</comment>
<comment type="similarity">
    <text evidence="1">Belongs to the TrpA family.</text>
</comment>
<dbReference type="EC" id="4.2.1.20" evidence="1"/>
<dbReference type="EMBL" id="CU207366">
    <property type="protein sequence ID" value="CAL67630.1"/>
    <property type="molecule type" value="Genomic_DNA"/>
</dbReference>
<dbReference type="RefSeq" id="WP_011710533.1">
    <property type="nucleotide sequence ID" value="NC_008571.1"/>
</dbReference>
<dbReference type="SMR" id="A0M4T5"/>
<dbReference type="STRING" id="411154.GFO_2674"/>
<dbReference type="KEGG" id="gfo:GFO_2674"/>
<dbReference type="eggNOG" id="COG0159">
    <property type="taxonomic scope" value="Bacteria"/>
</dbReference>
<dbReference type="HOGENOM" id="CLU_016734_0_0_10"/>
<dbReference type="OrthoDB" id="9804578at2"/>
<dbReference type="UniPathway" id="UPA00035">
    <property type="reaction ID" value="UER00044"/>
</dbReference>
<dbReference type="Proteomes" id="UP000000755">
    <property type="component" value="Chromosome"/>
</dbReference>
<dbReference type="GO" id="GO:0005829">
    <property type="term" value="C:cytosol"/>
    <property type="evidence" value="ECO:0007669"/>
    <property type="project" value="TreeGrafter"/>
</dbReference>
<dbReference type="GO" id="GO:0004834">
    <property type="term" value="F:tryptophan synthase activity"/>
    <property type="evidence" value="ECO:0007669"/>
    <property type="project" value="UniProtKB-UniRule"/>
</dbReference>
<dbReference type="CDD" id="cd04724">
    <property type="entry name" value="Tryptophan_synthase_alpha"/>
    <property type="match status" value="1"/>
</dbReference>
<dbReference type="FunFam" id="3.20.20.70:FF:000037">
    <property type="entry name" value="Tryptophan synthase alpha chain"/>
    <property type="match status" value="1"/>
</dbReference>
<dbReference type="Gene3D" id="3.20.20.70">
    <property type="entry name" value="Aldolase class I"/>
    <property type="match status" value="1"/>
</dbReference>
<dbReference type="HAMAP" id="MF_00131">
    <property type="entry name" value="Trp_synth_alpha"/>
    <property type="match status" value="1"/>
</dbReference>
<dbReference type="InterPro" id="IPR013785">
    <property type="entry name" value="Aldolase_TIM"/>
</dbReference>
<dbReference type="InterPro" id="IPR011060">
    <property type="entry name" value="RibuloseP-bd_barrel"/>
</dbReference>
<dbReference type="InterPro" id="IPR018204">
    <property type="entry name" value="Trp_synthase_alpha_AS"/>
</dbReference>
<dbReference type="InterPro" id="IPR002028">
    <property type="entry name" value="Trp_synthase_suA"/>
</dbReference>
<dbReference type="NCBIfam" id="TIGR00262">
    <property type="entry name" value="trpA"/>
    <property type="match status" value="1"/>
</dbReference>
<dbReference type="PANTHER" id="PTHR43406:SF1">
    <property type="entry name" value="TRYPTOPHAN SYNTHASE ALPHA CHAIN, CHLOROPLASTIC"/>
    <property type="match status" value="1"/>
</dbReference>
<dbReference type="PANTHER" id="PTHR43406">
    <property type="entry name" value="TRYPTOPHAN SYNTHASE, ALPHA CHAIN"/>
    <property type="match status" value="1"/>
</dbReference>
<dbReference type="Pfam" id="PF00290">
    <property type="entry name" value="Trp_syntA"/>
    <property type="match status" value="1"/>
</dbReference>
<dbReference type="SUPFAM" id="SSF51366">
    <property type="entry name" value="Ribulose-phoshate binding barrel"/>
    <property type="match status" value="1"/>
</dbReference>
<dbReference type="PROSITE" id="PS00167">
    <property type="entry name" value="TRP_SYNTHASE_ALPHA"/>
    <property type="match status" value="1"/>
</dbReference>
<organism>
    <name type="scientific">Christiangramia forsetii (strain DSM 17595 / CGMCC 1.15422 / KT0803)</name>
    <name type="common">Gramella forsetii</name>
    <dbReference type="NCBI Taxonomy" id="411154"/>
    <lineage>
        <taxon>Bacteria</taxon>
        <taxon>Pseudomonadati</taxon>
        <taxon>Bacteroidota</taxon>
        <taxon>Flavobacteriia</taxon>
        <taxon>Flavobacteriales</taxon>
        <taxon>Flavobacteriaceae</taxon>
        <taxon>Christiangramia</taxon>
    </lineage>
</organism>
<protein>
    <recommendedName>
        <fullName evidence="1">Tryptophan synthase alpha chain</fullName>
        <ecNumber evidence="1">4.2.1.20</ecNumber>
    </recommendedName>
</protein>